<name>ATPF_PLAOC</name>
<feature type="chain" id="PRO_0000368972" description="ATP synthase subunit b, chloroplastic">
    <location>
        <begin position="1"/>
        <end position="184"/>
    </location>
</feature>
<feature type="transmembrane region" description="Helical" evidence="1">
    <location>
        <begin position="27"/>
        <end position="49"/>
    </location>
</feature>
<proteinExistence type="inferred from homology"/>
<accession>Q09G60</accession>
<comment type="function">
    <text evidence="1">F(1)F(0) ATP synthase produces ATP from ADP in the presence of a proton or sodium gradient. F-type ATPases consist of two structural domains, F(1) containing the extramembraneous catalytic core and F(0) containing the membrane proton channel, linked together by a central stalk and a peripheral stalk. During catalysis, ATP synthesis in the catalytic domain of F(1) is coupled via a rotary mechanism of the central stalk subunits to proton translocation.</text>
</comment>
<comment type="function">
    <text evidence="1">Component of the F(0) channel, it forms part of the peripheral stalk, linking F(1) to F(0).</text>
</comment>
<comment type="subunit">
    <text evidence="1">F-type ATPases have 2 components, F(1) - the catalytic core - and F(0) - the membrane proton channel. F(1) has five subunits: alpha(3), beta(3), gamma(1), delta(1), epsilon(1). F(0) has four main subunits: a(1), b(1), b'(1) and c(10-14). The alpha and beta chains form an alternating ring which encloses part of the gamma chain. F(1) is attached to F(0) by a central stalk formed by the gamma and epsilon chains, while a peripheral stalk is formed by the delta, b and b' chains.</text>
</comment>
<comment type="subcellular location">
    <subcellularLocation>
        <location evidence="1">Plastid</location>
        <location evidence="1">Chloroplast thylakoid membrane</location>
        <topology evidence="1">Single-pass membrane protein</topology>
    </subcellularLocation>
</comment>
<comment type="miscellaneous">
    <text>In plastids the F-type ATPase is also known as CF(1)CF(0).</text>
</comment>
<comment type="similarity">
    <text evidence="1">Belongs to the ATPase B chain family.</text>
</comment>
<keyword id="KW-0066">ATP synthesis</keyword>
<keyword id="KW-0138">CF(0)</keyword>
<keyword id="KW-0150">Chloroplast</keyword>
<keyword id="KW-0375">Hydrogen ion transport</keyword>
<keyword id="KW-0406">Ion transport</keyword>
<keyword id="KW-0472">Membrane</keyword>
<keyword id="KW-0934">Plastid</keyword>
<keyword id="KW-0793">Thylakoid</keyword>
<keyword id="KW-0812">Transmembrane</keyword>
<keyword id="KW-1133">Transmembrane helix</keyword>
<keyword id="KW-0813">Transport</keyword>
<reference key="1">
    <citation type="journal article" date="2006" name="BMC Plant Biol.">
        <title>Rapid and accurate pyrosequencing of angiosperm plastid genomes.</title>
        <authorList>
            <person name="Moore M.J."/>
            <person name="Dhingra A."/>
            <person name="Soltis P.S."/>
            <person name="Shaw R."/>
            <person name="Farmerie W.G."/>
            <person name="Folta K.M."/>
            <person name="Soltis D.E."/>
        </authorList>
    </citation>
    <scope>NUCLEOTIDE SEQUENCE [LARGE SCALE GENOMIC DNA]</scope>
</reference>
<geneLocation type="chloroplast"/>
<evidence type="ECO:0000255" key="1">
    <source>
        <dbReference type="HAMAP-Rule" id="MF_01398"/>
    </source>
</evidence>
<organism>
    <name type="scientific">Platanus occidentalis</name>
    <name type="common">Sycamore</name>
    <name type="synonym">American plane tree</name>
    <dbReference type="NCBI Taxonomy" id="4403"/>
    <lineage>
        <taxon>Eukaryota</taxon>
        <taxon>Viridiplantae</taxon>
        <taxon>Streptophyta</taxon>
        <taxon>Embryophyta</taxon>
        <taxon>Tracheophyta</taxon>
        <taxon>Spermatophyta</taxon>
        <taxon>Magnoliopsida</taxon>
        <taxon>Proteales</taxon>
        <taxon>Platanaceae</taxon>
        <taxon>Platanus</taxon>
    </lineage>
</organism>
<dbReference type="EMBL" id="DQ923116">
    <property type="protein sequence ID" value="ABI49764.1"/>
    <property type="molecule type" value="Genomic_DNA"/>
</dbReference>
<dbReference type="RefSeq" id="YP_740551.1">
    <property type="nucleotide sequence ID" value="NC_008335.1"/>
</dbReference>
<dbReference type="SMR" id="Q09G60"/>
<dbReference type="GeneID" id="4271283"/>
<dbReference type="GO" id="GO:0009535">
    <property type="term" value="C:chloroplast thylakoid membrane"/>
    <property type="evidence" value="ECO:0007669"/>
    <property type="project" value="UniProtKB-SubCell"/>
</dbReference>
<dbReference type="GO" id="GO:0045259">
    <property type="term" value="C:proton-transporting ATP synthase complex"/>
    <property type="evidence" value="ECO:0007669"/>
    <property type="project" value="UniProtKB-KW"/>
</dbReference>
<dbReference type="GO" id="GO:0046933">
    <property type="term" value="F:proton-transporting ATP synthase activity, rotational mechanism"/>
    <property type="evidence" value="ECO:0007669"/>
    <property type="project" value="UniProtKB-UniRule"/>
</dbReference>
<dbReference type="CDD" id="cd06503">
    <property type="entry name" value="ATP-synt_Fo_b"/>
    <property type="match status" value="1"/>
</dbReference>
<dbReference type="HAMAP" id="MF_01398">
    <property type="entry name" value="ATP_synth_b_bprime"/>
    <property type="match status" value="1"/>
</dbReference>
<dbReference type="InterPro" id="IPR002146">
    <property type="entry name" value="ATP_synth_b/b'su_bac/chlpt"/>
</dbReference>
<dbReference type="PANTHER" id="PTHR34264">
    <property type="entry name" value="ATP SYNTHASE SUBUNIT B, CHLOROPLASTIC"/>
    <property type="match status" value="1"/>
</dbReference>
<dbReference type="PANTHER" id="PTHR34264:SF3">
    <property type="entry name" value="ATP SYNTHASE SUBUNIT B, CHLOROPLASTIC"/>
    <property type="match status" value="1"/>
</dbReference>
<dbReference type="Pfam" id="PF00430">
    <property type="entry name" value="ATP-synt_B"/>
    <property type="match status" value="1"/>
</dbReference>
<sequence length="184" mass="21006">MQNLTDSFVSLGHWPSAGSFGFNTDILATNPINLSVVLGVLIFFGKGVLSDLLDNRKQRILSTIRNSEELRGGAIEQLEKARARLRKVEMEADEFRVNGYSEIEREKLNLINSTYKNLERLENYKNETIQFEQQRAINQVRQRVFQQALQRALGTLNSCLNNELHLRTISANIGMFGTMKEITD</sequence>
<protein>
    <recommendedName>
        <fullName evidence="1">ATP synthase subunit b, chloroplastic</fullName>
    </recommendedName>
    <alternativeName>
        <fullName evidence="1">ATP synthase F(0) sector subunit b</fullName>
    </alternativeName>
    <alternativeName>
        <fullName evidence="1">ATPase subunit I</fullName>
    </alternativeName>
</protein>
<gene>
    <name evidence="1" type="primary">atpF</name>
</gene>